<accession>P40391</accession>
<name>PGM_NEIMB</name>
<sequence length="460" mass="49476">MASIARDIFKAYDIRGIVGKTLTDEAAYLIGKAIAAKAAEKGITRIALGRDGRLSGPELMEHIRRGFTDSGINVLNVGMVATPMLYFAAVNECGGSGVMITGSHNPPDYNGFKMMLGGDTLAGEAIQELLSIIEKDGFAAAGKQGSVTEKDISGEYLKHITGHIRLKRPMNIAIDAGNGVGGAFAGKLYKGLGNKVTELFCDVDGTFPNHHPDPSKPKNLQDLIAALKNGDAEIGLAFDGDADRLGVVTKDGNIIYPDRQLMLFAQDVLNRNPGAKVIFDVKSTRLLAPWIKEHGGKAIMEKTGHSFIKSAMKETGAPVAGEMSGHIFFKERWFGFDDGLYAGARLLEILSASDNPSEVLNNLPQSISTPELNIALPEGSNGHQVIDELAAKAEFEGATEIITIDGLRVEFPDGFGLMRASNTTPILVLRFEADTQEAIERIQNQFKAVIESNPNLIWPL</sequence>
<gene>
    <name type="primary">pgm</name>
    <name type="ordered locus">NMB0790</name>
</gene>
<reference key="1">
    <citation type="journal article" date="1994" name="J. Biol. Chem.">
        <title>Lipooligosaccharide biosynthesis in pathogenic Neisseria. Cloning, identification, and characterization of the phosphoglucomutase gene.</title>
        <authorList>
            <person name="Zhou D."/>
            <person name="Stephens D.S."/>
            <person name="Gibson B.W."/>
            <person name="Engstrom J.J."/>
            <person name="McAllister C.F."/>
            <person name="Lee F.K.N."/>
            <person name="Apicella M.A."/>
        </authorList>
    </citation>
    <scope>NUCLEOTIDE SEQUENCE [GENOMIC DNA]</scope>
    <source>
        <strain>NMB / Serogroup B</strain>
    </source>
</reference>
<reference key="2">
    <citation type="journal article" date="2000" name="Science">
        <title>Complete genome sequence of Neisseria meningitidis serogroup B strain MC58.</title>
        <authorList>
            <person name="Tettelin H."/>
            <person name="Saunders N.J."/>
            <person name="Heidelberg J.F."/>
            <person name="Jeffries A.C."/>
            <person name="Nelson K.E."/>
            <person name="Eisen J.A."/>
            <person name="Ketchum K.A."/>
            <person name="Hood D.W."/>
            <person name="Peden J.F."/>
            <person name="Dodson R.J."/>
            <person name="Nelson W.C."/>
            <person name="Gwinn M.L."/>
            <person name="DeBoy R.T."/>
            <person name="Peterson J.D."/>
            <person name="Hickey E.K."/>
            <person name="Haft D.H."/>
            <person name="Salzberg S.L."/>
            <person name="White O."/>
            <person name="Fleischmann R.D."/>
            <person name="Dougherty B.A."/>
            <person name="Mason T.M."/>
            <person name="Ciecko A."/>
            <person name="Parksey D.S."/>
            <person name="Blair E."/>
            <person name="Cittone H."/>
            <person name="Clark E.B."/>
            <person name="Cotton M.D."/>
            <person name="Utterback T.R."/>
            <person name="Khouri H.M."/>
            <person name="Qin H."/>
            <person name="Vamathevan J.J."/>
            <person name="Gill J."/>
            <person name="Scarlato V."/>
            <person name="Masignani V."/>
            <person name="Pizza M."/>
            <person name="Grandi G."/>
            <person name="Sun L."/>
            <person name="Smith H.O."/>
            <person name="Fraser C.M."/>
            <person name="Moxon E.R."/>
            <person name="Rappuoli R."/>
            <person name="Venter J.C."/>
        </authorList>
    </citation>
    <scope>NUCLEOTIDE SEQUENCE [LARGE SCALE GENOMIC DNA]</scope>
    <source>
        <strain>ATCC BAA-335 / MC58</strain>
    </source>
</reference>
<protein>
    <recommendedName>
        <fullName>Phosphoglucomutase</fullName>
        <shortName>PGM</shortName>
        <ecNumber>5.4.2.2</ecNumber>
    </recommendedName>
    <alternativeName>
        <fullName>Glucose phosphomutase</fullName>
    </alternativeName>
</protein>
<proteinExistence type="inferred from homology"/>
<dbReference type="EC" id="5.4.2.2"/>
<dbReference type="EMBL" id="U02490">
    <property type="protein sequence ID" value="AAA20589.1"/>
    <property type="molecule type" value="Genomic_DNA"/>
</dbReference>
<dbReference type="EMBL" id="AE002098">
    <property type="protein sequence ID" value="AAF41203.1"/>
    <property type="molecule type" value="Genomic_DNA"/>
</dbReference>
<dbReference type="PIR" id="B53614">
    <property type="entry name" value="B53614"/>
</dbReference>
<dbReference type="PIR" id="C81159">
    <property type="entry name" value="C81159"/>
</dbReference>
<dbReference type="RefSeq" id="NP_273832.1">
    <property type="nucleotide sequence ID" value="NC_003112.2"/>
</dbReference>
<dbReference type="RefSeq" id="WP_010980847.1">
    <property type="nucleotide sequence ID" value="NC_003112.2"/>
</dbReference>
<dbReference type="SMR" id="P40391"/>
<dbReference type="FunCoup" id="P40391">
    <property type="interactions" value="254"/>
</dbReference>
<dbReference type="STRING" id="122586.NMB0790"/>
<dbReference type="PaxDb" id="122586-NMB0790"/>
<dbReference type="KEGG" id="nme:NMB0790"/>
<dbReference type="PATRIC" id="fig|122586.8.peg.1002"/>
<dbReference type="HOGENOM" id="CLU_016950_9_1_4"/>
<dbReference type="InParanoid" id="P40391"/>
<dbReference type="OrthoDB" id="9803322at2"/>
<dbReference type="Proteomes" id="UP000000425">
    <property type="component" value="Chromosome"/>
</dbReference>
<dbReference type="GO" id="GO:0005737">
    <property type="term" value="C:cytoplasm"/>
    <property type="evidence" value="ECO:0007669"/>
    <property type="project" value="UniProtKB-SubCell"/>
</dbReference>
<dbReference type="GO" id="GO:0000287">
    <property type="term" value="F:magnesium ion binding"/>
    <property type="evidence" value="ECO:0007669"/>
    <property type="project" value="InterPro"/>
</dbReference>
<dbReference type="GO" id="GO:0004614">
    <property type="term" value="F:phosphoglucomutase activity"/>
    <property type="evidence" value="ECO:0007669"/>
    <property type="project" value="UniProtKB-EC"/>
</dbReference>
<dbReference type="GO" id="GO:0006006">
    <property type="term" value="P:glucose metabolic process"/>
    <property type="evidence" value="ECO:0007669"/>
    <property type="project" value="UniProtKB-KW"/>
</dbReference>
<dbReference type="CDD" id="cd03089">
    <property type="entry name" value="PMM_PGM"/>
    <property type="match status" value="1"/>
</dbReference>
<dbReference type="Gene3D" id="3.40.120.10">
    <property type="entry name" value="Alpha-D-Glucose-1,6-Bisphosphate, subunit A, domain 3"/>
    <property type="match status" value="3"/>
</dbReference>
<dbReference type="Gene3D" id="3.30.310.50">
    <property type="entry name" value="Alpha-D-phosphohexomutase, C-terminal domain"/>
    <property type="match status" value="1"/>
</dbReference>
<dbReference type="InterPro" id="IPR005844">
    <property type="entry name" value="A-D-PHexomutase_a/b/a-I"/>
</dbReference>
<dbReference type="InterPro" id="IPR016055">
    <property type="entry name" value="A-D-PHexomutase_a/b/a-I/II/III"/>
</dbReference>
<dbReference type="InterPro" id="IPR005845">
    <property type="entry name" value="A-D-PHexomutase_a/b/a-II"/>
</dbReference>
<dbReference type="InterPro" id="IPR005846">
    <property type="entry name" value="A-D-PHexomutase_a/b/a-III"/>
</dbReference>
<dbReference type="InterPro" id="IPR005843">
    <property type="entry name" value="A-D-PHexomutase_C"/>
</dbReference>
<dbReference type="InterPro" id="IPR036900">
    <property type="entry name" value="A-D-PHexomutase_C_sf"/>
</dbReference>
<dbReference type="InterPro" id="IPR016066">
    <property type="entry name" value="A-D-PHexomutase_CS"/>
</dbReference>
<dbReference type="InterPro" id="IPR005841">
    <property type="entry name" value="Alpha-D-phosphohexomutase_SF"/>
</dbReference>
<dbReference type="PANTHER" id="PTHR43771">
    <property type="entry name" value="PHOSPHOMANNOMUTASE"/>
    <property type="match status" value="1"/>
</dbReference>
<dbReference type="PANTHER" id="PTHR43771:SF2">
    <property type="entry name" value="PHOSPHOMANNOMUTASE_PHOSPHOGLUCOMUTASE"/>
    <property type="match status" value="1"/>
</dbReference>
<dbReference type="Pfam" id="PF02878">
    <property type="entry name" value="PGM_PMM_I"/>
    <property type="match status" value="1"/>
</dbReference>
<dbReference type="Pfam" id="PF02879">
    <property type="entry name" value="PGM_PMM_II"/>
    <property type="match status" value="1"/>
</dbReference>
<dbReference type="Pfam" id="PF02880">
    <property type="entry name" value="PGM_PMM_III"/>
    <property type="match status" value="1"/>
</dbReference>
<dbReference type="Pfam" id="PF00408">
    <property type="entry name" value="PGM_PMM_IV"/>
    <property type="match status" value="1"/>
</dbReference>
<dbReference type="PRINTS" id="PR00509">
    <property type="entry name" value="PGMPMM"/>
</dbReference>
<dbReference type="SUPFAM" id="SSF55957">
    <property type="entry name" value="Phosphoglucomutase, C-terminal domain"/>
    <property type="match status" value="1"/>
</dbReference>
<dbReference type="SUPFAM" id="SSF53738">
    <property type="entry name" value="Phosphoglucomutase, first 3 domains"/>
    <property type="match status" value="3"/>
</dbReference>
<dbReference type="PROSITE" id="PS00710">
    <property type="entry name" value="PGM_PMM"/>
    <property type="match status" value="1"/>
</dbReference>
<organism>
    <name type="scientific">Neisseria meningitidis serogroup B (strain ATCC BAA-335 / MC58)</name>
    <dbReference type="NCBI Taxonomy" id="122586"/>
    <lineage>
        <taxon>Bacteria</taxon>
        <taxon>Pseudomonadati</taxon>
        <taxon>Pseudomonadota</taxon>
        <taxon>Betaproteobacteria</taxon>
        <taxon>Neisseriales</taxon>
        <taxon>Neisseriaceae</taxon>
        <taxon>Neisseria</taxon>
    </lineage>
</organism>
<evidence type="ECO:0000250" key="1"/>
<evidence type="ECO:0000250" key="2">
    <source>
        <dbReference type="UniProtKB" id="P00949"/>
    </source>
</evidence>
<evidence type="ECO:0000305" key="3"/>
<comment type="function">
    <text>This enzyme participates in both the breakdown and synthesis of glucose.</text>
</comment>
<comment type="catalytic activity">
    <reaction>
        <text>alpha-D-glucose 1-phosphate = alpha-D-glucose 6-phosphate</text>
        <dbReference type="Rhea" id="RHEA:23536"/>
        <dbReference type="ChEBI" id="CHEBI:58225"/>
        <dbReference type="ChEBI" id="CHEBI:58601"/>
        <dbReference type="EC" id="5.4.2.2"/>
    </reaction>
</comment>
<comment type="cofactor">
    <cofactor evidence="1">
        <name>Mg(2+)</name>
        <dbReference type="ChEBI" id="CHEBI:18420"/>
    </cofactor>
    <text evidence="1">Binds 1 Mg(2+) ion per subunit.</text>
</comment>
<comment type="subcellular location">
    <subcellularLocation>
        <location evidence="1">Cytoplasm</location>
    </subcellularLocation>
</comment>
<comment type="similarity">
    <text evidence="3">Belongs to the phosphohexose mutase family.</text>
</comment>
<feature type="chain" id="PRO_0000147812" description="Phosphoglucomutase">
    <location>
        <begin position="1"/>
        <end position="460"/>
    </location>
</feature>
<feature type="active site" description="Phosphoserine intermediate" evidence="2">
    <location>
        <position position="103"/>
    </location>
</feature>
<feature type="binding site" evidence="2">
    <location>
        <begin position="103"/>
        <end position="104"/>
    </location>
    <ligand>
        <name>substrate</name>
    </ligand>
</feature>
<feature type="binding site" description="via phosphate group" evidence="2">
    <location>
        <position position="103"/>
    </location>
    <ligand>
        <name>Mg(2+)</name>
        <dbReference type="ChEBI" id="CHEBI:18420"/>
    </ligand>
</feature>
<feature type="binding site" evidence="2">
    <location>
        <position position="113"/>
    </location>
    <ligand>
        <name>substrate</name>
    </ligand>
</feature>
<feature type="binding site" evidence="2">
    <location>
        <position position="239"/>
    </location>
    <ligand>
        <name>Mg(2+)</name>
        <dbReference type="ChEBI" id="CHEBI:18420"/>
    </ligand>
</feature>
<feature type="binding site" evidence="2">
    <location>
        <position position="241"/>
    </location>
    <ligand>
        <name>Mg(2+)</name>
        <dbReference type="ChEBI" id="CHEBI:18420"/>
    </ligand>
</feature>
<feature type="binding site" evidence="2">
    <location>
        <begin position="243"/>
        <end position="244"/>
    </location>
    <ligand>
        <name>substrate</name>
    </ligand>
</feature>
<feature type="binding site" evidence="2">
    <location>
        <position position="243"/>
    </location>
    <ligand>
        <name>Mg(2+)</name>
        <dbReference type="ChEBI" id="CHEBI:18420"/>
    </ligand>
</feature>
<feature type="binding site" evidence="2">
    <location>
        <position position="303"/>
    </location>
    <ligand>
        <name>substrate</name>
    </ligand>
</feature>
<feature type="binding site" evidence="2">
    <location>
        <begin position="322"/>
        <end position="324"/>
    </location>
    <ligand>
        <name>substrate</name>
    </ligand>
</feature>
<feature type="sequence conflict" description="In Ref. 1; AAA20589." evidence="3" ref="1">
    <original>A</original>
    <variation>R</variation>
    <location>
        <position position="140"/>
    </location>
</feature>
<feature type="sequence conflict" description="In Ref. 1; AAA20589." evidence="3" ref="1">
    <original>K</original>
    <variation>E</variation>
    <location>
        <position position="195"/>
    </location>
</feature>
<feature type="sequence conflict" description="In Ref. 1; AAA20589." evidence="3" ref="1">
    <original>V</original>
    <variation>A</variation>
    <location>
        <position position="277"/>
    </location>
</feature>
<feature type="sequence conflict" description="In Ref. 1; AAA20589." evidence="3" ref="1">
    <original>K</original>
    <variation>E</variation>
    <location>
        <position position="282"/>
    </location>
</feature>
<feature type="sequence conflict" description="In Ref. 1; AAA20589." evidence="3" ref="1">
    <original>L</original>
    <variation>V</variation>
    <location>
        <position position="287"/>
    </location>
</feature>
<feature type="sequence conflict" description="In Ref. 1; AAA20589." evidence="3" ref="1">
    <original>S</original>
    <variation>T</variation>
    <location>
        <position position="357"/>
    </location>
</feature>
<keyword id="KW-0119">Carbohydrate metabolism</keyword>
<keyword id="KW-0963">Cytoplasm</keyword>
<keyword id="KW-0313">Glucose metabolism</keyword>
<keyword id="KW-0413">Isomerase</keyword>
<keyword id="KW-0460">Magnesium</keyword>
<keyword id="KW-0479">Metal-binding</keyword>
<keyword id="KW-0597">Phosphoprotein</keyword>
<keyword id="KW-1185">Reference proteome</keyword>